<feature type="chain" id="PRO_0000240494" description="UPF0367 protein PMT9312_0127">
    <location>
        <begin position="1"/>
        <end position="90"/>
    </location>
</feature>
<reference key="1">
    <citation type="journal article" date="2006" name="Science">
        <title>Genomic islands and the ecology and evolution of Prochlorococcus.</title>
        <authorList>
            <person name="Coleman M.L."/>
            <person name="Sullivan M.B."/>
            <person name="Martiny A.C."/>
            <person name="Steglich C."/>
            <person name="Barry K."/>
            <person name="Delong E.F."/>
            <person name="Chisholm S.W."/>
        </authorList>
    </citation>
    <scope>NUCLEOTIDE SEQUENCE [LARGE SCALE GENOMIC DNA]</scope>
    <source>
        <strain>MIT 9312</strain>
    </source>
</reference>
<evidence type="ECO:0000255" key="1">
    <source>
        <dbReference type="HAMAP-Rule" id="MF_01360"/>
    </source>
</evidence>
<dbReference type="EMBL" id="CP000111">
    <property type="protein sequence ID" value="ABB49189.1"/>
    <property type="molecule type" value="Genomic_DNA"/>
</dbReference>
<dbReference type="RefSeq" id="WP_011375693.1">
    <property type="nucleotide sequence ID" value="NC_007577.1"/>
</dbReference>
<dbReference type="STRING" id="74546.PMT9312_0127"/>
<dbReference type="KEGG" id="pmi:PMT9312_0127"/>
<dbReference type="eggNOG" id="ENOG5032YB3">
    <property type="taxonomic scope" value="Bacteria"/>
</dbReference>
<dbReference type="HOGENOM" id="CLU_180777_1_0_3"/>
<dbReference type="OrthoDB" id="516864at2"/>
<dbReference type="Proteomes" id="UP000002715">
    <property type="component" value="Chromosome"/>
</dbReference>
<dbReference type="HAMAP" id="MF_01360">
    <property type="entry name" value="UPF0367"/>
    <property type="match status" value="1"/>
</dbReference>
<dbReference type="InterPro" id="IPR020885">
    <property type="entry name" value="UPF0367"/>
</dbReference>
<dbReference type="NCBIfam" id="NF010236">
    <property type="entry name" value="PRK13683.1"/>
    <property type="match status" value="1"/>
</dbReference>
<name>Y127_PROM9</name>
<sequence length="90" mass="10324">MYSLELSLRYSPFPIAIQKKEFEDVKRIYEEIKNSMNEPLETSNLVELRCDKVQDKLIAVRAQEIISVQIYEKSSVAGGAKRPGFSLDID</sequence>
<protein>
    <recommendedName>
        <fullName evidence="1">UPF0367 protein PMT9312_0127</fullName>
    </recommendedName>
</protein>
<gene>
    <name type="ordered locus">PMT9312_0127</name>
</gene>
<accession>Q31D56</accession>
<organism>
    <name type="scientific">Prochlorococcus marinus (strain MIT 9312)</name>
    <dbReference type="NCBI Taxonomy" id="74546"/>
    <lineage>
        <taxon>Bacteria</taxon>
        <taxon>Bacillati</taxon>
        <taxon>Cyanobacteriota</taxon>
        <taxon>Cyanophyceae</taxon>
        <taxon>Synechococcales</taxon>
        <taxon>Prochlorococcaceae</taxon>
        <taxon>Prochlorococcus</taxon>
    </lineage>
</organism>
<proteinExistence type="inferred from homology"/>
<comment type="similarity">
    <text evidence="1">Belongs to the UPF0367 family.</text>
</comment>